<feature type="chain" id="PRO_1000023302" description="Thymidylate kinase">
    <location>
        <begin position="1"/>
        <end position="212"/>
    </location>
</feature>
<feature type="binding site" evidence="1">
    <location>
        <begin position="9"/>
        <end position="16"/>
    </location>
    <ligand>
        <name>ATP</name>
        <dbReference type="ChEBI" id="CHEBI:30616"/>
    </ligand>
</feature>
<reference key="1">
    <citation type="journal article" date="2006" name="Proc. Natl. Acad. Sci. U.S.A.">
        <title>Genome sequence of Synechococcus CC9311: insights into adaptation to a coastal environment.</title>
        <authorList>
            <person name="Palenik B."/>
            <person name="Ren Q."/>
            <person name="Dupont C.L."/>
            <person name="Myers G.S."/>
            <person name="Heidelberg J.F."/>
            <person name="Badger J.H."/>
            <person name="Madupu R."/>
            <person name="Nelson W.C."/>
            <person name="Brinkac L.M."/>
            <person name="Dodson R.J."/>
            <person name="Durkin A.S."/>
            <person name="Daugherty S.C."/>
            <person name="Sullivan S.A."/>
            <person name="Khouri H."/>
            <person name="Mohamoud Y."/>
            <person name="Halpin R."/>
            <person name="Paulsen I.T."/>
        </authorList>
    </citation>
    <scope>NUCLEOTIDE SEQUENCE [LARGE SCALE GENOMIC DNA]</scope>
    <source>
        <strain>CC9311</strain>
    </source>
</reference>
<evidence type="ECO:0000255" key="1">
    <source>
        <dbReference type="HAMAP-Rule" id="MF_00165"/>
    </source>
</evidence>
<name>KTHY_SYNS3</name>
<protein>
    <recommendedName>
        <fullName evidence="1">Thymidylate kinase</fullName>
        <ecNumber evidence="1">2.7.4.9</ecNumber>
    </recommendedName>
    <alternativeName>
        <fullName evidence="1">dTMP kinase</fullName>
    </alternativeName>
</protein>
<comment type="function">
    <text evidence="1">Phosphorylation of dTMP to form dTDP in both de novo and salvage pathways of dTTP synthesis.</text>
</comment>
<comment type="catalytic activity">
    <reaction evidence="1">
        <text>dTMP + ATP = dTDP + ADP</text>
        <dbReference type="Rhea" id="RHEA:13517"/>
        <dbReference type="ChEBI" id="CHEBI:30616"/>
        <dbReference type="ChEBI" id="CHEBI:58369"/>
        <dbReference type="ChEBI" id="CHEBI:63528"/>
        <dbReference type="ChEBI" id="CHEBI:456216"/>
        <dbReference type="EC" id="2.7.4.9"/>
    </reaction>
</comment>
<comment type="similarity">
    <text evidence="1">Belongs to the thymidylate kinase family.</text>
</comment>
<gene>
    <name evidence="1" type="primary">tmk</name>
    <name type="ordered locus">sync_2593</name>
</gene>
<keyword id="KW-0067">ATP-binding</keyword>
<keyword id="KW-0418">Kinase</keyword>
<keyword id="KW-0545">Nucleotide biosynthesis</keyword>
<keyword id="KW-0547">Nucleotide-binding</keyword>
<keyword id="KW-1185">Reference proteome</keyword>
<keyword id="KW-0808">Transferase</keyword>
<accession>Q0I6Z1</accession>
<dbReference type="EC" id="2.7.4.9" evidence="1"/>
<dbReference type="EMBL" id="CP000435">
    <property type="protein sequence ID" value="ABI47598.1"/>
    <property type="molecule type" value="Genomic_DNA"/>
</dbReference>
<dbReference type="SMR" id="Q0I6Z1"/>
<dbReference type="STRING" id="64471.sync_2593"/>
<dbReference type="KEGG" id="syg:sync_2593"/>
<dbReference type="eggNOG" id="COG0125">
    <property type="taxonomic scope" value="Bacteria"/>
</dbReference>
<dbReference type="HOGENOM" id="CLU_049131_0_0_3"/>
<dbReference type="OrthoDB" id="9774907at2"/>
<dbReference type="Proteomes" id="UP000001961">
    <property type="component" value="Chromosome"/>
</dbReference>
<dbReference type="GO" id="GO:0005829">
    <property type="term" value="C:cytosol"/>
    <property type="evidence" value="ECO:0007669"/>
    <property type="project" value="TreeGrafter"/>
</dbReference>
<dbReference type="GO" id="GO:0005524">
    <property type="term" value="F:ATP binding"/>
    <property type="evidence" value="ECO:0007669"/>
    <property type="project" value="UniProtKB-UniRule"/>
</dbReference>
<dbReference type="GO" id="GO:0004798">
    <property type="term" value="F:dTMP kinase activity"/>
    <property type="evidence" value="ECO:0007669"/>
    <property type="project" value="UniProtKB-UniRule"/>
</dbReference>
<dbReference type="GO" id="GO:0006233">
    <property type="term" value="P:dTDP biosynthetic process"/>
    <property type="evidence" value="ECO:0007669"/>
    <property type="project" value="InterPro"/>
</dbReference>
<dbReference type="GO" id="GO:0006235">
    <property type="term" value="P:dTTP biosynthetic process"/>
    <property type="evidence" value="ECO:0007669"/>
    <property type="project" value="UniProtKB-UniRule"/>
</dbReference>
<dbReference type="GO" id="GO:0006227">
    <property type="term" value="P:dUDP biosynthetic process"/>
    <property type="evidence" value="ECO:0007669"/>
    <property type="project" value="TreeGrafter"/>
</dbReference>
<dbReference type="CDD" id="cd01672">
    <property type="entry name" value="TMPK"/>
    <property type="match status" value="1"/>
</dbReference>
<dbReference type="FunFam" id="3.40.50.300:FF:000225">
    <property type="entry name" value="Thymidylate kinase"/>
    <property type="match status" value="1"/>
</dbReference>
<dbReference type="Gene3D" id="3.40.50.300">
    <property type="entry name" value="P-loop containing nucleotide triphosphate hydrolases"/>
    <property type="match status" value="1"/>
</dbReference>
<dbReference type="HAMAP" id="MF_00165">
    <property type="entry name" value="Thymidylate_kinase"/>
    <property type="match status" value="1"/>
</dbReference>
<dbReference type="InterPro" id="IPR027417">
    <property type="entry name" value="P-loop_NTPase"/>
</dbReference>
<dbReference type="InterPro" id="IPR039430">
    <property type="entry name" value="Thymidylate_kin-like_dom"/>
</dbReference>
<dbReference type="InterPro" id="IPR018095">
    <property type="entry name" value="Thymidylate_kin_CS"/>
</dbReference>
<dbReference type="InterPro" id="IPR018094">
    <property type="entry name" value="Thymidylate_kinase"/>
</dbReference>
<dbReference type="NCBIfam" id="TIGR00041">
    <property type="entry name" value="DTMP_kinase"/>
    <property type="match status" value="1"/>
</dbReference>
<dbReference type="PANTHER" id="PTHR10344">
    <property type="entry name" value="THYMIDYLATE KINASE"/>
    <property type="match status" value="1"/>
</dbReference>
<dbReference type="PANTHER" id="PTHR10344:SF4">
    <property type="entry name" value="UMP-CMP KINASE 2, MITOCHONDRIAL"/>
    <property type="match status" value="1"/>
</dbReference>
<dbReference type="Pfam" id="PF02223">
    <property type="entry name" value="Thymidylate_kin"/>
    <property type="match status" value="1"/>
</dbReference>
<dbReference type="SUPFAM" id="SSF52540">
    <property type="entry name" value="P-loop containing nucleoside triphosphate hydrolases"/>
    <property type="match status" value="1"/>
</dbReference>
<dbReference type="PROSITE" id="PS01331">
    <property type="entry name" value="THYMIDYLATE_KINASE"/>
    <property type="match status" value="1"/>
</dbReference>
<organism>
    <name type="scientific">Synechococcus sp. (strain CC9311)</name>
    <dbReference type="NCBI Taxonomy" id="64471"/>
    <lineage>
        <taxon>Bacteria</taxon>
        <taxon>Bacillati</taxon>
        <taxon>Cyanobacteriota</taxon>
        <taxon>Cyanophyceae</taxon>
        <taxon>Synechococcales</taxon>
        <taxon>Synechococcaceae</taxon>
        <taxon>Synechococcus</taxon>
    </lineage>
</organism>
<proteinExistence type="inferred from homology"/>
<sequence>MGRLLVLEGIDGCGKTTQLQQLSSWLPKSGLMPDESRLVVTREPGGTALGTSLRQLLLHPPQDADPGPTAELLLYAADRAQHVDRVIQPALERGDWVLSDRFTGSTMAYQGYGRGLNRELITDLERIATRGLTPDMTVWLDIPLALSVQRRGSREEDRIEAEGLAFLERVSEGFSDMCKARDWVSVVADRPLLEVAEAIQTALLTRAAAWQR</sequence>